<keyword id="KW-0963">Cytoplasm</keyword>
<keyword id="KW-0479">Metal-binding</keyword>
<keyword id="KW-0862">Zinc</keyword>
<gene>
    <name type="ordered locus">SEQ_1541</name>
</gene>
<feature type="chain" id="PRO_1000148325" description="Protein SprT-like">
    <location>
        <begin position="1"/>
        <end position="145"/>
    </location>
</feature>
<feature type="domain" description="SprT-like" evidence="1">
    <location>
        <begin position="5"/>
        <end position="140"/>
    </location>
</feature>
<feature type="active site" evidence="1">
    <location>
        <position position="65"/>
    </location>
</feature>
<feature type="binding site" evidence="1">
    <location>
        <position position="64"/>
    </location>
    <ligand>
        <name>Zn(2+)</name>
        <dbReference type="ChEBI" id="CHEBI:29105"/>
    </ligand>
</feature>
<feature type="binding site" evidence="1">
    <location>
        <position position="68"/>
    </location>
    <ligand>
        <name>Zn(2+)</name>
        <dbReference type="ChEBI" id="CHEBI:29105"/>
    </ligand>
</feature>
<organism>
    <name type="scientific">Streptococcus equi subsp. equi (strain 4047)</name>
    <dbReference type="NCBI Taxonomy" id="553482"/>
    <lineage>
        <taxon>Bacteria</taxon>
        <taxon>Bacillati</taxon>
        <taxon>Bacillota</taxon>
        <taxon>Bacilli</taxon>
        <taxon>Lactobacillales</taxon>
        <taxon>Streptococcaceae</taxon>
        <taxon>Streptococcus</taxon>
    </lineage>
</organism>
<sequence length="145" mass="17055">MSLTDYVREVSLADFGKPFKHQASWNRRLRTTGGRFFPKDGHLDFNPKILEEHGETVFRQIVRHELCHYHLYFEGLGFRHKDQAFKELLDQVDGLRYAPKLQSHQANYLYICQDCGQAYDRKRPINLAVFACGRCHGRLIEKNQS</sequence>
<protein>
    <recommendedName>
        <fullName evidence="1">Protein SprT-like</fullName>
    </recommendedName>
</protein>
<reference key="1">
    <citation type="journal article" date="2009" name="PLoS Pathog.">
        <title>Genomic evidence for the evolution of Streptococcus equi: host restriction, increased virulence, and genetic exchange with human pathogens.</title>
        <authorList>
            <person name="Holden M.T.G."/>
            <person name="Heather Z."/>
            <person name="Paillot R."/>
            <person name="Steward K.F."/>
            <person name="Webb K."/>
            <person name="Ainslie F."/>
            <person name="Jourdan T."/>
            <person name="Bason N.C."/>
            <person name="Holroyd N.E."/>
            <person name="Mungall K."/>
            <person name="Quail M.A."/>
            <person name="Sanders M."/>
            <person name="Simmonds M."/>
            <person name="Willey D."/>
            <person name="Brooks K."/>
            <person name="Aanensen D.M."/>
            <person name="Spratt B.G."/>
            <person name="Jolley K.A."/>
            <person name="Maiden M.C.J."/>
            <person name="Kehoe M."/>
            <person name="Chanter N."/>
            <person name="Bentley S.D."/>
            <person name="Robinson C."/>
            <person name="Maskell D.J."/>
            <person name="Parkhill J."/>
            <person name="Waller A.S."/>
        </authorList>
    </citation>
    <scope>NUCLEOTIDE SEQUENCE [LARGE SCALE GENOMIC DNA]</scope>
    <source>
        <strain>4047</strain>
    </source>
</reference>
<accession>C0M899</accession>
<proteinExistence type="inferred from homology"/>
<name>SPRTL_STRE4</name>
<comment type="cofactor">
    <cofactor evidence="1">
        <name>Zn(2+)</name>
        <dbReference type="ChEBI" id="CHEBI:29105"/>
    </cofactor>
    <text evidence="1">Binds 1 zinc ion.</text>
</comment>
<comment type="subcellular location">
    <subcellularLocation>
        <location evidence="1">Cytoplasm</location>
    </subcellularLocation>
</comment>
<comment type="similarity">
    <text evidence="1">Belongs to the SprT family.</text>
</comment>
<evidence type="ECO:0000255" key="1">
    <source>
        <dbReference type="HAMAP-Rule" id="MF_00745"/>
    </source>
</evidence>
<dbReference type="EMBL" id="FM204883">
    <property type="protein sequence ID" value="CAW94486.1"/>
    <property type="molecule type" value="Genomic_DNA"/>
</dbReference>
<dbReference type="RefSeq" id="WP_012679820.1">
    <property type="nucleotide sequence ID" value="NC_012471.1"/>
</dbReference>
<dbReference type="KEGG" id="seu:SEQ_1541"/>
<dbReference type="HOGENOM" id="CLU_123820_0_0_9"/>
<dbReference type="OrthoDB" id="9799909at2"/>
<dbReference type="Proteomes" id="UP000001365">
    <property type="component" value="Chromosome"/>
</dbReference>
<dbReference type="GO" id="GO:0005737">
    <property type="term" value="C:cytoplasm"/>
    <property type="evidence" value="ECO:0007669"/>
    <property type="project" value="UniProtKB-SubCell"/>
</dbReference>
<dbReference type="GO" id="GO:0008270">
    <property type="term" value="F:zinc ion binding"/>
    <property type="evidence" value="ECO:0007669"/>
    <property type="project" value="UniProtKB-UniRule"/>
</dbReference>
<dbReference type="GO" id="GO:0006950">
    <property type="term" value="P:response to stress"/>
    <property type="evidence" value="ECO:0007669"/>
    <property type="project" value="UniProtKB-ARBA"/>
</dbReference>
<dbReference type="HAMAP" id="MF_00745">
    <property type="entry name" value="SprT_like"/>
    <property type="match status" value="1"/>
</dbReference>
<dbReference type="InterPro" id="IPR006640">
    <property type="entry name" value="SprT-like_domain"/>
</dbReference>
<dbReference type="InterPro" id="IPR023524">
    <property type="entry name" value="Uncharacterised_SprT-like"/>
</dbReference>
<dbReference type="NCBIfam" id="NF003339">
    <property type="entry name" value="PRK04351.1"/>
    <property type="match status" value="1"/>
</dbReference>
<dbReference type="Pfam" id="PF10263">
    <property type="entry name" value="SprT-like"/>
    <property type="match status" value="1"/>
</dbReference>
<dbReference type="SMART" id="SM00731">
    <property type="entry name" value="SprT"/>
    <property type="match status" value="1"/>
</dbReference>